<organism>
    <name type="scientific">Caldicellulosiruptor bescii (strain ATCC BAA-1888 / DSM 6725 / KCTC 15123 / Z-1320)</name>
    <name type="common">Anaerocellum thermophilum</name>
    <dbReference type="NCBI Taxonomy" id="521460"/>
    <lineage>
        <taxon>Bacteria</taxon>
        <taxon>Bacillati</taxon>
        <taxon>Bacillota</taxon>
        <taxon>Bacillota incertae sedis</taxon>
        <taxon>Caldicellulosiruptorales</taxon>
        <taxon>Caldicellulosiruptoraceae</taxon>
        <taxon>Caldicellulosiruptor</taxon>
    </lineage>
</organism>
<proteinExistence type="inferred from homology"/>
<sequence length="334" mass="36389">MRIGIDAMGGDNAPHAVIEGVALYLKENRDDEIVIFGDKNIIEEECVQKVQPLDKLEIIDCKEKIEFEDEPVKAIRQKKDSSIVVGLQYLKEGKIDAFVSAGSTGALMAGGLLIVGRIKGIDRPALTTRLPYKDGQYLLIDVGSNTDCRPINILQFAQMATVYVSKVLGKKNPTVGLLNIGTEENKGNDLSKQSYELLKSAKNINFVGNVEARSLPFSPPDIVVCDGFVGNIVLKLTEGMGLLFFDILKDIAKSSFRAQIGGLLLKPYLKRLKGKYDYKEVGGAPLLGIDGIIVKCHGSSDGQAIFSGIHQAKAFYENNVLALLKEEITAESEV</sequence>
<keyword id="KW-0963">Cytoplasm</keyword>
<keyword id="KW-0444">Lipid biosynthesis</keyword>
<keyword id="KW-0443">Lipid metabolism</keyword>
<keyword id="KW-0594">Phospholipid biosynthesis</keyword>
<keyword id="KW-1208">Phospholipid metabolism</keyword>
<keyword id="KW-0808">Transferase</keyword>
<dbReference type="EC" id="2.3.1.274" evidence="1"/>
<dbReference type="EMBL" id="CP001393">
    <property type="protein sequence ID" value="ACM60254.1"/>
    <property type="molecule type" value="Genomic_DNA"/>
</dbReference>
<dbReference type="RefSeq" id="WP_015907652.1">
    <property type="nucleotide sequence ID" value="NC_012034.1"/>
</dbReference>
<dbReference type="SMR" id="B9MRF0"/>
<dbReference type="STRING" id="521460.Athe_1153"/>
<dbReference type="GeneID" id="31772502"/>
<dbReference type="KEGG" id="ate:Athe_1153"/>
<dbReference type="eggNOG" id="COG0416">
    <property type="taxonomic scope" value="Bacteria"/>
</dbReference>
<dbReference type="HOGENOM" id="CLU_039379_1_1_9"/>
<dbReference type="UniPathway" id="UPA00085"/>
<dbReference type="Proteomes" id="UP000007723">
    <property type="component" value="Chromosome"/>
</dbReference>
<dbReference type="GO" id="GO:0005737">
    <property type="term" value="C:cytoplasm"/>
    <property type="evidence" value="ECO:0007669"/>
    <property type="project" value="UniProtKB-SubCell"/>
</dbReference>
<dbReference type="GO" id="GO:0043811">
    <property type="term" value="F:phosphate:acyl-[acyl carrier protein] acyltransferase activity"/>
    <property type="evidence" value="ECO:0007669"/>
    <property type="project" value="UniProtKB-UniRule"/>
</dbReference>
<dbReference type="GO" id="GO:0006633">
    <property type="term" value="P:fatty acid biosynthetic process"/>
    <property type="evidence" value="ECO:0007669"/>
    <property type="project" value="UniProtKB-UniRule"/>
</dbReference>
<dbReference type="GO" id="GO:0008654">
    <property type="term" value="P:phospholipid biosynthetic process"/>
    <property type="evidence" value="ECO:0007669"/>
    <property type="project" value="UniProtKB-KW"/>
</dbReference>
<dbReference type="Gene3D" id="3.40.718.10">
    <property type="entry name" value="Isopropylmalate Dehydrogenase"/>
    <property type="match status" value="1"/>
</dbReference>
<dbReference type="HAMAP" id="MF_00019">
    <property type="entry name" value="PlsX"/>
    <property type="match status" value="1"/>
</dbReference>
<dbReference type="InterPro" id="IPR003664">
    <property type="entry name" value="FA_synthesis"/>
</dbReference>
<dbReference type="InterPro" id="IPR012281">
    <property type="entry name" value="Phospholipid_synth_PlsX-like"/>
</dbReference>
<dbReference type="NCBIfam" id="TIGR00182">
    <property type="entry name" value="plsX"/>
    <property type="match status" value="1"/>
</dbReference>
<dbReference type="PANTHER" id="PTHR30100">
    <property type="entry name" value="FATTY ACID/PHOSPHOLIPID SYNTHESIS PROTEIN PLSX"/>
    <property type="match status" value="1"/>
</dbReference>
<dbReference type="PANTHER" id="PTHR30100:SF1">
    <property type="entry name" value="PHOSPHATE ACYLTRANSFERASE"/>
    <property type="match status" value="1"/>
</dbReference>
<dbReference type="Pfam" id="PF02504">
    <property type="entry name" value="FA_synthesis"/>
    <property type="match status" value="1"/>
</dbReference>
<dbReference type="PIRSF" id="PIRSF002465">
    <property type="entry name" value="Phsphlp_syn_PlsX"/>
    <property type="match status" value="1"/>
</dbReference>
<dbReference type="SUPFAM" id="SSF53659">
    <property type="entry name" value="Isocitrate/Isopropylmalate dehydrogenase-like"/>
    <property type="match status" value="1"/>
</dbReference>
<reference key="1">
    <citation type="submission" date="2009-01" db="EMBL/GenBank/DDBJ databases">
        <title>Complete sequence of chromosome of Caldicellulosiruptor becscii DSM 6725.</title>
        <authorList>
            <person name="Lucas S."/>
            <person name="Copeland A."/>
            <person name="Lapidus A."/>
            <person name="Glavina del Rio T."/>
            <person name="Tice H."/>
            <person name="Bruce D."/>
            <person name="Goodwin L."/>
            <person name="Pitluck S."/>
            <person name="Sims D."/>
            <person name="Meincke L."/>
            <person name="Brettin T."/>
            <person name="Detter J.C."/>
            <person name="Han C."/>
            <person name="Larimer F."/>
            <person name="Land M."/>
            <person name="Hauser L."/>
            <person name="Kyrpides N."/>
            <person name="Ovchinnikova G."/>
            <person name="Kataeva I."/>
            <person name="Adams M.W.W."/>
        </authorList>
    </citation>
    <scope>NUCLEOTIDE SEQUENCE [LARGE SCALE GENOMIC DNA]</scope>
    <source>
        <strain>ATCC BAA-1888 / DSM 6725 / KCTC 15123 / Z-1320</strain>
    </source>
</reference>
<protein>
    <recommendedName>
        <fullName evidence="1">Phosphate acyltransferase</fullName>
        <ecNumber evidence="1">2.3.1.274</ecNumber>
    </recommendedName>
    <alternativeName>
        <fullName evidence="1">Acyl-ACP phosphotransacylase</fullName>
    </alternativeName>
    <alternativeName>
        <fullName evidence="1">Acyl-[acyl-carrier-protein]--phosphate acyltransferase</fullName>
    </alternativeName>
    <alternativeName>
        <fullName evidence="1">Phosphate-acyl-ACP acyltransferase</fullName>
    </alternativeName>
</protein>
<accession>B9MRF0</accession>
<comment type="function">
    <text evidence="1">Catalyzes the reversible formation of acyl-phosphate (acyl-PO(4)) from acyl-[acyl-carrier-protein] (acyl-ACP). This enzyme utilizes acyl-ACP as fatty acyl donor, but not acyl-CoA.</text>
</comment>
<comment type="catalytic activity">
    <reaction evidence="1">
        <text>a fatty acyl-[ACP] + phosphate = an acyl phosphate + holo-[ACP]</text>
        <dbReference type="Rhea" id="RHEA:42292"/>
        <dbReference type="Rhea" id="RHEA-COMP:9685"/>
        <dbReference type="Rhea" id="RHEA-COMP:14125"/>
        <dbReference type="ChEBI" id="CHEBI:43474"/>
        <dbReference type="ChEBI" id="CHEBI:59918"/>
        <dbReference type="ChEBI" id="CHEBI:64479"/>
        <dbReference type="ChEBI" id="CHEBI:138651"/>
        <dbReference type="EC" id="2.3.1.274"/>
    </reaction>
</comment>
<comment type="pathway">
    <text evidence="1">Lipid metabolism; phospholipid metabolism.</text>
</comment>
<comment type="subunit">
    <text evidence="1">Homodimer. Probably interacts with PlsY.</text>
</comment>
<comment type="subcellular location">
    <subcellularLocation>
        <location evidence="1">Cytoplasm</location>
    </subcellularLocation>
    <text evidence="1">Associated with the membrane possibly through PlsY.</text>
</comment>
<comment type="similarity">
    <text evidence="1">Belongs to the PlsX family.</text>
</comment>
<feature type="chain" id="PRO_1000193120" description="Phosphate acyltransferase">
    <location>
        <begin position="1"/>
        <end position="334"/>
    </location>
</feature>
<evidence type="ECO:0000255" key="1">
    <source>
        <dbReference type="HAMAP-Rule" id="MF_00019"/>
    </source>
</evidence>
<gene>
    <name evidence="1" type="primary">plsX</name>
    <name type="ordered locus">Athe_1153</name>
</gene>
<name>PLSX_CALBD</name>